<comment type="function">
    <text>May be involved in transcriptional regulation.</text>
</comment>
<comment type="subcellular location">
    <subcellularLocation>
        <location evidence="4">Nucleus</location>
    </subcellularLocation>
</comment>
<comment type="similarity">
    <text evidence="4">Belongs to the krueppel C2H2-type zinc-finger protein family.</text>
</comment>
<organism>
    <name type="scientific">Mus musculus</name>
    <name type="common">Mouse</name>
    <dbReference type="NCBI Taxonomy" id="10090"/>
    <lineage>
        <taxon>Eukaryota</taxon>
        <taxon>Metazoa</taxon>
        <taxon>Chordata</taxon>
        <taxon>Craniata</taxon>
        <taxon>Vertebrata</taxon>
        <taxon>Euteleostomi</taxon>
        <taxon>Mammalia</taxon>
        <taxon>Eutheria</taxon>
        <taxon>Euarchontoglires</taxon>
        <taxon>Glires</taxon>
        <taxon>Rodentia</taxon>
        <taxon>Myomorpha</taxon>
        <taxon>Muroidea</taxon>
        <taxon>Muridae</taxon>
        <taxon>Murinae</taxon>
        <taxon>Mus</taxon>
        <taxon>Mus</taxon>
    </lineage>
</organism>
<feature type="chain" id="PRO_0000047475" description="Zinc finger protein 235">
    <location>
        <begin position="1"/>
        <end position="645"/>
    </location>
</feature>
<feature type="domain" description="KRAB" evidence="2">
    <location>
        <begin position="8"/>
        <end position="86"/>
    </location>
</feature>
<feature type="zinc finger region" description="C2H2-type 1" evidence="1">
    <location>
        <begin position="285"/>
        <end position="307"/>
    </location>
</feature>
<feature type="zinc finger region" description="C2H2-type 2" evidence="1">
    <location>
        <begin position="313"/>
        <end position="335"/>
    </location>
</feature>
<feature type="zinc finger region" description="C2H2-type 3" evidence="1">
    <location>
        <begin position="341"/>
        <end position="363"/>
    </location>
</feature>
<feature type="zinc finger region" description="C2H2-type 4" evidence="1">
    <location>
        <begin position="369"/>
        <end position="391"/>
    </location>
</feature>
<feature type="zinc finger region" description="C2H2-type 5" evidence="1">
    <location>
        <begin position="397"/>
        <end position="419"/>
    </location>
</feature>
<feature type="zinc finger region" description="C2H2-type 6" evidence="1">
    <location>
        <begin position="425"/>
        <end position="447"/>
    </location>
</feature>
<feature type="zinc finger region" description="C2H2-type 7" evidence="1">
    <location>
        <begin position="453"/>
        <end position="475"/>
    </location>
</feature>
<feature type="zinc finger region" description="C2H2-type 8" evidence="1">
    <location>
        <begin position="481"/>
        <end position="503"/>
    </location>
</feature>
<feature type="zinc finger region" description="C2H2-type 9" evidence="1">
    <location>
        <begin position="509"/>
        <end position="531"/>
    </location>
</feature>
<feature type="zinc finger region" description="C2H2-type 10" evidence="1">
    <location>
        <begin position="537"/>
        <end position="559"/>
    </location>
</feature>
<feature type="zinc finger region" description="C2H2-type 11" evidence="1">
    <location>
        <begin position="565"/>
        <end position="587"/>
    </location>
</feature>
<feature type="zinc finger region" description="C2H2-type 12" evidence="1">
    <location>
        <begin position="593"/>
        <end position="615"/>
    </location>
</feature>
<feature type="zinc finger region" description="C2H2-type 13" evidence="1">
    <location>
        <begin position="621"/>
        <end position="643"/>
    </location>
</feature>
<feature type="region of interest" description="Disordered" evidence="3">
    <location>
        <begin position="112"/>
        <end position="144"/>
    </location>
</feature>
<feature type="region of interest" description="Disordered" evidence="3">
    <location>
        <begin position="255"/>
        <end position="280"/>
    </location>
</feature>
<feature type="compositionally biased region" description="Polar residues" evidence="3">
    <location>
        <begin position="129"/>
        <end position="144"/>
    </location>
</feature>
<feature type="sequence conflict" description="In Ref. 2; BAC26187." evidence="4" ref="2">
    <original>A</original>
    <variation>P</variation>
    <location>
        <position position="85"/>
    </location>
</feature>
<dbReference type="EMBL" id="U46186">
    <property type="protein sequence ID" value="AAB03529.1"/>
    <property type="molecule type" value="mRNA"/>
</dbReference>
<dbReference type="EMBL" id="AK028905">
    <property type="protein sequence ID" value="BAC26187.1"/>
    <property type="molecule type" value="mRNA"/>
</dbReference>
<dbReference type="EMBL" id="AK040325">
    <property type="protein sequence ID" value="BAC30565.1"/>
    <property type="molecule type" value="mRNA"/>
</dbReference>
<dbReference type="EMBL" id="AK132229">
    <property type="protein sequence ID" value="BAE21045.1"/>
    <property type="molecule type" value="mRNA"/>
</dbReference>
<dbReference type="EMBL" id="AK146095">
    <property type="protein sequence ID" value="BAE26898.1"/>
    <property type="molecule type" value="mRNA"/>
</dbReference>
<dbReference type="EMBL" id="BC003776">
    <property type="protein sequence ID" value="AAH03776.1"/>
    <property type="molecule type" value="mRNA"/>
</dbReference>
<dbReference type="CCDS" id="CCDS39828.1"/>
<dbReference type="RefSeq" id="NP_033593.1">
    <property type="nucleotide sequence ID" value="NM_009567.4"/>
</dbReference>
<dbReference type="RefSeq" id="XP_017177632.1">
    <property type="nucleotide sequence ID" value="XM_017322143.1"/>
</dbReference>
<dbReference type="SMR" id="Q61116"/>
<dbReference type="BioGRID" id="204682">
    <property type="interactions" value="29"/>
</dbReference>
<dbReference type="FunCoup" id="Q61116">
    <property type="interactions" value="4"/>
</dbReference>
<dbReference type="STRING" id="10090.ENSMUSP00000104077"/>
<dbReference type="iPTMnet" id="Q61116"/>
<dbReference type="PhosphoSitePlus" id="Q61116"/>
<dbReference type="jPOST" id="Q61116"/>
<dbReference type="PaxDb" id="10090-ENSMUSP00000032696"/>
<dbReference type="ProteomicsDB" id="299574"/>
<dbReference type="DNASU" id="22755"/>
<dbReference type="Ensembl" id="ENSMUST00000032696.7">
    <property type="protein sequence ID" value="ENSMUSP00000032696.7"/>
    <property type="gene ID" value="ENSMUSG00000055305.16"/>
</dbReference>
<dbReference type="Ensembl" id="ENSMUST00000108438.10">
    <property type="protein sequence ID" value="ENSMUSP00000104077.4"/>
    <property type="gene ID" value="ENSMUSG00000055305.16"/>
</dbReference>
<dbReference type="GeneID" id="22755"/>
<dbReference type="KEGG" id="mmu:22755"/>
<dbReference type="UCSC" id="uc009fpe.1">
    <property type="organism name" value="mouse"/>
</dbReference>
<dbReference type="AGR" id="MGI:107611"/>
<dbReference type="CTD" id="22755"/>
<dbReference type="MGI" id="MGI:107611">
    <property type="gene designation" value="Zfp93"/>
</dbReference>
<dbReference type="VEuPathDB" id="HostDB:ENSMUSG00000055305"/>
<dbReference type="eggNOG" id="KOG1721">
    <property type="taxonomic scope" value="Eukaryota"/>
</dbReference>
<dbReference type="GeneTree" id="ENSGT00940000163265"/>
<dbReference type="HOGENOM" id="CLU_002678_17_1_1"/>
<dbReference type="InParanoid" id="Q61116"/>
<dbReference type="OMA" id="FAPYVNI"/>
<dbReference type="OrthoDB" id="9411774at2759"/>
<dbReference type="PhylomeDB" id="Q61116"/>
<dbReference type="TreeFam" id="TF350845"/>
<dbReference type="BioGRID-ORCS" id="22755">
    <property type="hits" value="3 hits in 76 CRISPR screens"/>
</dbReference>
<dbReference type="ChiTaRS" id="Zfp93">
    <property type="organism name" value="mouse"/>
</dbReference>
<dbReference type="PRO" id="PR:Q61116"/>
<dbReference type="Proteomes" id="UP000000589">
    <property type="component" value="Chromosome 7"/>
</dbReference>
<dbReference type="RNAct" id="Q61116">
    <property type="molecule type" value="protein"/>
</dbReference>
<dbReference type="Bgee" id="ENSMUSG00000055305">
    <property type="expression patterns" value="Expressed in undifferentiated genital tubercle and 125 other cell types or tissues"/>
</dbReference>
<dbReference type="GO" id="GO:0005634">
    <property type="term" value="C:nucleus"/>
    <property type="evidence" value="ECO:0007669"/>
    <property type="project" value="UniProtKB-SubCell"/>
</dbReference>
<dbReference type="GO" id="GO:0003677">
    <property type="term" value="F:DNA binding"/>
    <property type="evidence" value="ECO:0007669"/>
    <property type="project" value="UniProtKB-KW"/>
</dbReference>
<dbReference type="GO" id="GO:0008270">
    <property type="term" value="F:zinc ion binding"/>
    <property type="evidence" value="ECO:0007669"/>
    <property type="project" value="UniProtKB-KW"/>
</dbReference>
<dbReference type="GO" id="GO:0006355">
    <property type="term" value="P:regulation of DNA-templated transcription"/>
    <property type="evidence" value="ECO:0007669"/>
    <property type="project" value="InterPro"/>
</dbReference>
<dbReference type="CDD" id="cd07765">
    <property type="entry name" value="KRAB_A-box"/>
    <property type="match status" value="1"/>
</dbReference>
<dbReference type="FunFam" id="3.30.160.60:FF:000557">
    <property type="entry name" value="zinc finger and SCAN domain-containing protein 29"/>
    <property type="match status" value="1"/>
</dbReference>
<dbReference type="FunFam" id="3.30.160.60:FF:000295">
    <property type="entry name" value="zinc finger protein 19"/>
    <property type="match status" value="1"/>
</dbReference>
<dbReference type="FunFam" id="3.30.160.60:FF:000874">
    <property type="entry name" value="zinc finger protein 235 isoform X1"/>
    <property type="match status" value="1"/>
</dbReference>
<dbReference type="FunFam" id="3.30.160.60:FF:000913">
    <property type="entry name" value="zinc finger protein 235 isoform X1"/>
    <property type="match status" value="1"/>
</dbReference>
<dbReference type="FunFam" id="3.30.160.60:FF:000622">
    <property type="entry name" value="zinc finger protein 26 isoform X3"/>
    <property type="match status" value="1"/>
</dbReference>
<dbReference type="FunFam" id="3.30.160.60:FF:002343">
    <property type="entry name" value="Zinc finger protein 33A"/>
    <property type="match status" value="2"/>
</dbReference>
<dbReference type="FunFam" id="3.30.160.60:FF:001498">
    <property type="entry name" value="Zinc finger protein 404"/>
    <property type="match status" value="1"/>
</dbReference>
<dbReference type="FunFam" id="3.30.160.60:FF:002090">
    <property type="entry name" value="Zinc finger protein 473"/>
    <property type="match status" value="1"/>
</dbReference>
<dbReference type="FunFam" id="3.30.160.60:FF:000862">
    <property type="entry name" value="zinc finger protein 697"/>
    <property type="match status" value="1"/>
</dbReference>
<dbReference type="FunFam" id="3.30.160.60:FF:002357">
    <property type="entry name" value="Zinc finger protein 782"/>
    <property type="match status" value="2"/>
</dbReference>
<dbReference type="FunFam" id="3.30.160.60:FF:000537">
    <property type="entry name" value="Zinc finger with KRAB and SCAN domains 7"/>
    <property type="match status" value="1"/>
</dbReference>
<dbReference type="Gene3D" id="6.10.140.140">
    <property type="match status" value="1"/>
</dbReference>
<dbReference type="Gene3D" id="3.30.160.60">
    <property type="entry name" value="Classic Zinc Finger"/>
    <property type="match status" value="13"/>
</dbReference>
<dbReference type="InterPro" id="IPR001909">
    <property type="entry name" value="KRAB"/>
</dbReference>
<dbReference type="InterPro" id="IPR036051">
    <property type="entry name" value="KRAB_dom_sf"/>
</dbReference>
<dbReference type="InterPro" id="IPR036236">
    <property type="entry name" value="Znf_C2H2_sf"/>
</dbReference>
<dbReference type="InterPro" id="IPR013087">
    <property type="entry name" value="Znf_C2H2_type"/>
</dbReference>
<dbReference type="PANTHER" id="PTHR24381">
    <property type="entry name" value="ZINC FINGER PROTEIN"/>
    <property type="match status" value="1"/>
</dbReference>
<dbReference type="PANTHER" id="PTHR24381:SF452">
    <property type="entry name" value="ZINC FINGER PROTEIN 235-LIKE"/>
    <property type="match status" value="1"/>
</dbReference>
<dbReference type="Pfam" id="PF01352">
    <property type="entry name" value="KRAB"/>
    <property type="match status" value="1"/>
</dbReference>
<dbReference type="Pfam" id="PF00096">
    <property type="entry name" value="zf-C2H2"/>
    <property type="match status" value="12"/>
</dbReference>
<dbReference type="SMART" id="SM00349">
    <property type="entry name" value="KRAB"/>
    <property type="match status" value="1"/>
</dbReference>
<dbReference type="SMART" id="SM00355">
    <property type="entry name" value="ZnF_C2H2"/>
    <property type="match status" value="13"/>
</dbReference>
<dbReference type="SUPFAM" id="SSF57667">
    <property type="entry name" value="beta-beta-alpha zinc fingers"/>
    <property type="match status" value="7"/>
</dbReference>
<dbReference type="SUPFAM" id="SSF109640">
    <property type="entry name" value="KRAB domain (Kruppel-associated box)"/>
    <property type="match status" value="1"/>
</dbReference>
<dbReference type="PROSITE" id="PS50805">
    <property type="entry name" value="KRAB"/>
    <property type="match status" value="1"/>
</dbReference>
<dbReference type="PROSITE" id="PS00028">
    <property type="entry name" value="ZINC_FINGER_C2H2_1"/>
    <property type="match status" value="13"/>
</dbReference>
<dbReference type="PROSITE" id="PS50157">
    <property type="entry name" value="ZINC_FINGER_C2H2_2"/>
    <property type="match status" value="13"/>
</dbReference>
<reference key="1">
    <citation type="journal article" date="1996" name="Genomics">
        <title>Comparative analysis of a conserved zinc finger gene cluster on human chromosome 19q and mouse chromosome 7.</title>
        <authorList>
            <person name="Shannon M."/>
            <person name="Ashworth L.K."/>
            <person name="Mucenski M.L."/>
            <person name="Lamerdin J.E."/>
            <person name="Branscomb E."/>
            <person name="Stubbs L."/>
        </authorList>
    </citation>
    <scope>NUCLEOTIDE SEQUENCE [MRNA]</scope>
    <source>
        <strain>CD-1</strain>
        <tissue>Testis</tissue>
    </source>
</reference>
<reference key="2">
    <citation type="journal article" date="2005" name="Science">
        <title>The transcriptional landscape of the mammalian genome.</title>
        <authorList>
            <person name="Carninci P."/>
            <person name="Kasukawa T."/>
            <person name="Katayama S."/>
            <person name="Gough J."/>
            <person name="Frith M.C."/>
            <person name="Maeda N."/>
            <person name="Oyama R."/>
            <person name="Ravasi T."/>
            <person name="Lenhard B."/>
            <person name="Wells C."/>
            <person name="Kodzius R."/>
            <person name="Shimokawa K."/>
            <person name="Bajic V.B."/>
            <person name="Brenner S.E."/>
            <person name="Batalov S."/>
            <person name="Forrest A.R."/>
            <person name="Zavolan M."/>
            <person name="Davis M.J."/>
            <person name="Wilming L.G."/>
            <person name="Aidinis V."/>
            <person name="Allen J.E."/>
            <person name="Ambesi-Impiombato A."/>
            <person name="Apweiler R."/>
            <person name="Aturaliya R.N."/>
            <person name="Bailey T.L."/>
            <person name="Bansal M."/>
            <person name="Baxter L."/>
            <person name="Beisel K.W."/>
            <person name="Bersano T."/>
            <person name="Bono H."/>
            <person name="Chalk A.M."/>
            <person name="Chiu K.P."/>
            <person name="Choudhary V."/>
            <person name="Christoffels A."/>
            <person name="Clutterbuck D.R."/>
            <person name="Crowe M.L."/>
            <person name="Dalla E."/>
            <person name="Dalrymple B.P."/>
            <person name="de Bono B."/>
            <person name="Della Gatta G."/>
            <person name="di Bernardo D."/>
            <person name="Down T."/>
            <person name="Engstrom P."/>
            <person name="Fagiolini M."/>
            <person name="Faulkner G."/>
            <person name="Fletcher C.F."/>
            <person name="Fukushima T."/>
            <person name="Furuno M."/>
            <person name="Futaki S."/>
            <person name="Gariboldi M."/>
            <person name="Georgii-Hemming P."/>
            <person name="Gingeras T.R."/>
            <person name="Gojobori T."/>
            <person name="Green R.E."/>
            <person name="Gustincich S."/>
            <person name="Harbers M."/>
            <person name="Hayashi Y."/>
            <person name="Hensch T.K."/>
            <person name="Hirokawa N."/>
            <person name="Hill D."/>
            <person name="Huminiecki L."/>
            <person name="Iacono M."/>
            <person name="Ikeo K."/>
            <person name="Iwama A."/>
            <person name="Ishikawa T."/>
            <person name="Jakt M."/>
            <person name="Kanapin A."/>
            <person name="Katoh M."/>
            <person name="Kawasawa Y."/>
            <person name="Kelso J."/>
            <person name="Kitamura H."/>
            <person name="Kitano H."/>
            <person name="Kollias G."/>
            <person name="Krishnan S.P."/>
            <person name="Kruger A."/>
            <person name="Kummerfeld S.K."/>
            <person name="Kurochkin I.V."/>
            <person name="Lareau L.F."/>
            <person name="Lazarevic D."/>
            <person name="Lipovich L."/>
            <person name="Liu J."/>
            <person name="Liuni S."/>
            <person name="McWilliam S."/>
            <person name="Madan Babu M."/>
            <person name="Madera M."/>
            <person name="Marchionni L."/>
            <person name="Matsuda H."/>
            <person name="Matsuzawa S."/>
            <person name="Miki H."/>
            <person name="Mignone F."/>
            <person name="Miyake S."/>
            <person name="Morris K."/>
            <person name="Mottagui-Tabar S."/>
            <person name="Mulder N."/>
            <person name="Nakano N."/>
            <person name="Nakauchi H."/>
            <person name="Ng P."/>
            <person name="Nilsson R."/>
            <person name="Nishiguchi S."/>
            <person name="Nishikawa S."/>
            <person name="Nori F."/>
            <person name="Ohara O."/>
            <person name="Okazaki Y."/>
            <person name="Orlando V."/>
            <person name="Pang K.C."/>
            <person name="Pavan W.J."/>
            <person name="Pavesi G."/>
            <person name="Pesole G."/>
            <person name="Petrovsky N."/>
            <person name="Piazza S."/>
            <person name="Reed J."/>
            <person name="Reid J.F."/>
            <person name="Ring B.Z."/>
            <person name="Ringwald M."/>
            <person name="Rost B."/>
            <person name="Ruan Y."/>
            <person name="Salzberg S.L."/>
            <person name="Sandelin A."/>
            <person name="Schneider C."/>
            <person name="Schoenbach C."/>
            <person name="Sekiguchi K."/>
            <person name="Semple C.A."/>
            <person name="Seno S."/>
            <person name="Sessa L."/>
            <person name="Sheng Y."/>
            <person name="Shibata Y."/>
            <person name="Shimada H."/>
            <person name="Shimada K."/>
            <person name="Silva D."/>
            <person name="Sinclair B."/>
            <person name="Sperling S."/>
            <person name="Stupka E."/>
            <person name="Sugiura K."/>
            <person name="Sultana R."/>
            <person name="Takenaka Y."/>
            <person name="Taki K."/>
            <person name="Tammoja K."/>
            <person name="Tan S.L."/>
            <person name="Tang S."/>
            <person name="Taylor M.S."/>
            <person name="Tegner J."/>
            <person name="Teichmann S.A."/>
            <person name="Ueda H.R."/>
            <person name="van Nimwegen E."/>
            <person name="Verardo R."/>
            <person name="Wei C.L."/>
            <person name="Yagi K."/>
            <person name="Yamanishi H."/>
            <person name="Zabarovsky E."/>
            <person name="Zhu S."/>
            <person name="Zimmer A."/>
            <person name="Hide W."/>
            <person name="Bult C."/>
            <person name="Grimmond S.M."/>
            <person name="Teasdale R.D."/>
            <person name="Liu E.T."/>
            <person name="Brusic V."/>
            <person name="Quackenbush J."/>
            <person name="Wahlestedt C."/>
            <person name="Mattick J.S."/>
            <person name="Hume D.A."/>
            <person name="Kai C."/>
            <person name="Sasaki D."/>
            <person name="Tomaru Y."/>
            <person name="Fukuda S."/>
            <person name="Kanamori-Katayama M."/>
            <person name="Suzuki M."/>
            <person name="Aoki J."/>
            <person name="Arakawa T."/>
            <person name="Iida J."/>
            <person name="Imamura K."/>
            <person name="Itoh M."/>
            <person name="Kato T."/>
            <person name="Kawaji H."/>
            <person name="Kawagashira N."/>
            <person name="Kawashima T."/>
            <person name="Kojima M."/>
            <person name="Kondo S."/>
            <person name="Konno H."/>
            <person name="Nakano K."/>
            <person name="Ninomiya N."/>
            <person name="Nishio T."/>
            <person name="Okada M."/>
            <person name="Plessy C."/>
            <person name="Shibata K."/>
            <person name="Shiraki T."/>
            <person name="Suzuki S."/>
            <person name="Tagami M."/>
            <person name="Waki K."/>
            <person name="Watahiki A."/>
            <person name="Okamura-Oho Y."/>
            <person name="Suzuki H."/>
            <person name="Kawai J."/>
            <person name="Hayashizaki Y."/>
        </authorList>
    </citation>
    <scope>NUCLEOTIDE SEQUENCE [LARGE SCALE MRNA]</scope>
    <source>
        <strain>C57BL/6J</strain>
        <tissue>Brain</tissue>
        <tissue>Placenta</tissue>
        <tissue>Skin</tissue>
        <tissue>Thymus</tissue>
    </source>
</reference>
<reference key="3">
    <citation type="journal article" date="2004" name="Genome Res.">
        <title>The status, quality, and expansion of the NIH full-length cDNA project: the Mammalian Gene Collection (MGC).</title>
        <authorList>
            <consortium name="The MGC Project Team"/>
        </authorList>
    </citation>
    <scope>NUCLEOTIDE SEQUENCE [LARGE SCALE MRNA]</scope>
    <source>
        <strain>C57BL/6J</strain>
    </source>
</reference>
<sequence length="645" mass="73012">MTKLQEMVTFRDVAVVFSEEELGLLDAAQRKLYHDVMLENFRNLLAVGCQSPNKMAPLDTTGIRCLPLGQLPCWQMTSHDVNKLARAPEDGINTPGKGPHLLEQCHSSCHWGAEQPSQAPEDDGCLENLPSNHSSSSDNQEFLSGRAQSSWSKAHFSERWNHEKHCPQTLVKTKSQLLAPGVNILGCISHHDHNILHKRDKVPSSGDCDQVIFPMTLLTQHCVYREQKAYQCSRGQEVFSDSPSLELHQQTLLGKKSPVHSTHKDTRHSPSVPIQPSVHPGRKRYWCHECGKGFRQSSALQTHQRVHTGEKPYRCDSCGKGFSRSSDLNIHRRVHTGEKPYKCEVCGKGFTQWAHLQAHERIHTGEKPYKCGDCGKRFSCSSNLHTHQRVHTEEKPYECNECGKRFSLSGNLDIHQRVHTGEKPYKCEECGKGFSSASSFQSHQRVHTGEKPFHCSVCGKNFSRSSHFLDHQRIHTGEKPYRCEVCGKRFPWSLSLHSHQSVHTGKKPYKCGECGKGFSHASSLQAHHSVHTGEKPFKCNVCQKQFSKTSNLQAHQRVHTGEKPYKCDTCGKAFSQKSSLQVHQRIHTGEKPFKCEECGKEFRWSVGLSSHQRVHTGEKPYTCQQCGKGFSQASYFHMHQRVHTI</sequence>
<protein>
    <recommendedName>
        <fullName>Zinc finger protein 235</fullName>
    </recommendedName>
    <alternativeName>
        <fullName>Zinc finger protein 93</fullName>
        <shortName>Zfp-93</shortName>
    </alternativeName>
</protein>
<proteinExistence type="evidence at transcript level"/>
<keyword id="KW-0238">DNA-binding</keyword>
<keyword id="KW-0479">Metal-binding</keyword>
<keyword id="KW-0539">Nucleus</keyword>
<keyword id="KW-1185">Reference proteome</keyword>
<keyword id="KW-0677">Repeat</keyword>
<keyword id="KW-0804">Transcription</keyword>
<keyword id="KW-0805">Transcription regulation</keyword>
<keyword id="KW-0862">Zinc</keyword>
<keyword id="KW-0863">Zinc-finger</keyword>
<gene>
    <name type="primary">Znf235</name>
    <name type="synonym">Zfp93</name>
</gene>
<accession>Q61116</accession>
<accession>Q3UKA3</accession>
<accession>Q8CE70</accession>
<evidence type="ECO:0000255" key="1">
    <source>
        <dbReference type="PROSITE-ProRule" id="PRU00042"/>
    </source>
</evidence>
<evidence type="ECO:0000255" key="2">
    <source>
        <dbReference type="PROSITE-ProRule" id="PRU00119"/>
    </source>
</evidence>
<evidence type="ECO:0000256" key="3">
    <source>
        <dbReference type="SAM" id="MobiDB-lite"/>
    </source>
</evidence>
<evidence type="ECO:0000305" key="4"/>
<name>ZN235_MOUSE</name>